<protein>
    <recommendedName>
        <fullName evidence="10 11 12">Eukaryotic translation initiation factor 4E-1</fullName>
        <shortName evidence="10 11 12">Hv-eIF4E-1</shortName>
        <shortName evidence="10 11 12">eIF-4E-1</shortName>
    </recommendedName>
    <alternativeName>
        <fullName evidence="13">eIF-4F 25 kDa subunit</fullName>
    </alternativeName>
    <alternativeName>
        <fullName evidence="13">eIF-4F p26 subunit</fullName>
    </alternativeName>
    <alternativeName>
        <fullName evidence="10 11 12">mRNA cap-binding protein</fullName>
    </alternativeName>
</protein>
<dbReference type="EMBL" id="AY661558">
    <property type="protein sequence ID" value="AAV80393.1"/>
    <property type="molecule type" value="Genomic_DNA"/>
</dbReference>
<dbReference type="EMBL" id="FN600114">
    <property type="protein sequence ID" value="CBI68710.1"/>
    <property type="molecule type" value="mRNA"/>
</dbReference>
<dbReference type="EMBL" id="FN646082">
    <property type="protein sequence ID" value="CBI83258.1"/>
    <property type="molecule type" value="mRNA"/>
</dbReference>
<dbReference type="EMBL" id="FN646083">
    <property type="protein sequence ID" value="CBI83259.1"/>
    <property type="molecule type" value="mRNA"/>
</dbReference>
<dbReference type="EMBL" id="FN646084">
    <property type="protein sequence ID" value="CBI83260.1"/>
    <property type="molecule type" value="mRNA"/>
</dbReference>
<dbReference type="EMBL" id="FN646085">
    <property type="protein sequence ID" value="CBI83261.1"/>
    <property type="molecule type" value="mRNA"/>
</dbReference>
<dbReference type="EMBL" id="FN646086">
    <property type="protein sequence ID" value="CBI83262.1"/>
    <property type="molecule type" value="mRNA"/>
</dbReference>
<dbReference type="EMBL" id="FN646087">
    <property type="protein sequence ID" value="CBI83263.1"/>
    <property type="molecule type" value="mRNA"/>
</dbReference>
<dbReference type="EMBL" id="FN646088">
    <property type="protein sequence ID" value="CBI83264.1"/>
    <property type="molecule type" value="mRNA"/>
</dbReference>
<dbReference type="EMBL" id="FJ477092">
    <property type="protein sequence ID" value="ACK99543.1"/>
    <property type="molecule type" value="Genomic_DNA"/>
</dbReference>
<dbReference type="EMBL" id="LC037203">
    <property type="protein sequence ID" value="BAS53705.1"/>
    <property type="molecule type" value="Genomic_DNA"/>
</dbReference>
<dbReference type="EMBL" id="LC037204">
    <property type="protein sequence ID" value="BAS53706.1"/>
    <property type="molecule type" value="Genomic_DNA"/>
</dbReference>
<dbReference type="EMBL" id="AK365250">
    <property type="protein sequence ID" value="BAJ96453.1"/>
    <property type="molecule type" value="mRNA"/>
</dbReference>
<dbReference type="EMBL" id="AK368452">
    <property type="protein sequence ID" value="BAJ99655.1"/>
    <property type="molecule type" value="mRNA"/>
</dbReference>
<dbReference type="EMBL" id="AK368630">
    <property type="protein sequence ID" value="BAJ99833.1"/>
    <property type="molecule type" value="mRNA"/>
</dbReference>
<dbReference type="SMR" id="Q4QXS7"/>
<dbReference type="FunCoup" id="Q4QXS7">
    <property type="interactions" value="2367"/>
</dbReference>
<dbReference type="STRING" id="112509.Q4QXS7"/>
<dbReference type="PaxDb" id="4513-MLOC_4680.1"/>
<dbReference type="EnsemblPlants" id="HORVU.MOREX.r2.3HG0272870.1">
    <property type="protein sequence ID" value="HORVU.MOREX.r2.3HG0272870.1"/>
    <property type="gene ID" value="HORVU.MOREX.r2.3HG0272870"/>
</dbReference>
<dbReference type="EnsemblPlants" id="HORVU.MOREX.r3.3HG0327270.1">
    <property type="protein sequence ID" value="HORVU.MOREX.r3.3HG0327270.1"/>
    <property type="gene ID" value="HORVU.MOREX.r3.3HG0327270"/>
</dbReference>
<dbReference type="Gramene" id="HORVU.MOREX.r2.3HG0272870.1">
    <property type="protein sequence ID" value="HORVU.MOREX.r2.3HG0272870.1"/>
    <property type="gene ID" value="HORVU.MOREX.r2.3HG0272870"/>
</dbReference>
<dbReference type="Gramene" id="HORVU.MOREX.r3.3HG0327270.1">
    <property type="protein sequence ID" value="HORVU.MOREX.r3.3HG0327270.1"/>
    <property type="gene ID" value="HORVU.MOREX.r3.3HG0327270"/>
</dbReference>
<dbReference type="eggNOG" id="KOG1670">
    <property type="taxonomic scope" value="Eukaryota"/>
</dbReference>
<dbReference type="InParanoid" id="Q4QXS7"/>
<dbReference type="OMA" id="QTEFKMM"/>
<dbReference type="OrthoDB" id="590761at2759"/>
<dbReference type="Proteomes" id="UP000011116">
    <property type="component" value="Chromosome 3H"/>
</dbReference>
<dbReference type="ExpressionAtlas" id="Q4QXS7">
    <property type="expression patterns" value="baseline and differential"/>
</dbReference>
<dbReference type="GO" id="GO:0005737">
    <property type="term" value="C:cytoplasm"/>
    <property type="evidence" value="ECO:0000250"/>
    <property type="project" value="UniProtKB"/>
</dbReference>
<dbReference type="GO" id="GO:0016281">
    <property type="term" value="C:eukaryotic translation initiation factor 4F complex"/>
    <property type="evidence" value="ECO:0000318"/>
    <property type="project" value="GO_Central"/>
</dbReference>
<dbReference type="GO" id="GO:0005634">
    <property type="term" value="C:nucleus"/>
    <property type="evidence" value="ECO:0000250"/>
    <property type="project" value="UniProtKB"/>
</dbReference>
<dbReference type="GO" id="GO:0000340">
    <property type="term" value="F:RNA 7-methylguanosine cap binding"/>
    <property type="evidence" value="ECO:0000318"/>
    <property type="project" value="GO_Central"/>
</dbReference>
<dbReference type="GO" id="GO:0003723">
    <property type="term" value="F:RNA binding"/>
    <property type="evidence" value="ECO:0000250"/>
    <property type="project" value="UniProtKB"/>
</dbReference>
<dbReference type="GO" id="GO:0003743">
    <property type="term" value="F:translation initiation factor activity"/>
    <property type="evidence" value="ECO:0000250"/>
    <property type="project" value="UniProtKB"/>
</dbReference>
<dbReference type="GO" id="GO:0051607">
    <property type="term" value="P:defense response to virus"/>
    <property type="evidence" value="ECO:0000250"/>
    <property type="project" value="UniProtKB"/>
</dbReference>
<dbReference type="GO" id="GO:0006417">
    <property type="term" value="P:regulation of translation"/>
    <property type="evidence" value="ECO:0007669"/>
    <property type="project" value="UniProtKB-KW"/>
</dbReference>
<dbReference type="GO" id="GO:0006413">
    <property type="term" value="P:translational initiation"/>
    <property type="evidence" value="ECO:0000250"/>
    <property type="project" value="UniProtKB"/>
</dbReference>
<dbReference type="FunFam" id="3.30.760.10:FF:000003">
    <property type="entry name" value="Eukaryotic translation initiation factor 4E"/>
    <property type="match status" value="1"/>
</dbReference>
<dbReference type="Gene3D" id="3.30.760.10">
    <property type="entry name" value="RNA Cap, Translation Initiation Factor Eif4e"/>
    <property type="match status" value="1"/>
</dbReference>
<dbReference type="InterPro" id="IPR023398">
    <property type="entry name" value="TIF_eIF4e-like"/>
</dbReference>
<dbReference type="InterPro" id="IPR001040">
    <property type="entry name" value="TIF_eIF_4E"/>
</dbReference>
<dbReference type="InterPro" id="IPR019770">
    <property type="entry name" value="TIF_eIF_4E_CS"/>
</dbReference>
<dbReference type="PANTHER" id="PTHR11960">
    <property type="entry name" value="EUKARYOTIC TRANSLATION INITIATION FACTOR 4E RELATED"/>
    <property type="match status" value="1"/>
</dbReference>
<dbReference type="PANTHER" id="PTHR11960:SF8">
    <property type="entry name" value="EUKARYOTIC TRANSLATION INITIATION FACTOR 4E1-RELATED"/>
    <property type="match status" value="1"/>
</dbReference>
<dbReference type="Pfam" id="PF01652">
    <property type="entry name" value="IF4E"/>
    <property type="match status" value="1"/>
</dbReference>
<dbReference type="SUPFAM" id="SSF55418">
    <property type="entry name" value="eIF4e-like"/>
    <property type="match status" value="1"/>
</dbReference>
<dbReference type="PROSITE" id="PS00813">
    <property type="entry name" value="IF4E"/>
    <property type="match status" value="1"/>
</dbReference>
<comment type="function">
    <text evidence="2 5 8">Component of the protein complex eIF4F, which is involved in the recognition of the mRNA cap, ATP-dependent unwinding of 5'-terminal secondary structure and recruitment of mRNA to the ribosome (By similarity). Recognizes and binds the 7-methylguanosine-containing mRNA cap during an early step in the initiation of protein synthesis and facilitates ribosome binding by inducing the unwinding of the mRNAs secondary structures (By similarity). Key component of recessive resistance to potyviruses and bymoviruses, including barley yellow mosaic virus and barley mild mosaic virus (PubMed:15941403, PubMed:21806691).</text>
</comment>
<comment type="function">
    <text evidence="5 8">(Microbial infection) Susceptibility host factor required for viral infection by recruiting viral RNAs to the host ribosomal complex via an interaction with viral genome-linked protein (VPg).</text>
</comment>
<comment type="subunit">
    <text evidence="2">EIF4F is a multi-subunit complex, the composition of which varies with external and internal environmental conditions. It is composed of at least EIF4A, EIF4E and EIF4G. EIF4E is also known to interact with other partners. In higher plants two isoforms of EIF4F have been identified, named isoform EIF4F and isoform EIF(iso)4F. Isoform EIF4F has subunits p220 and p26, whereas isoform EIF(iso)4F has subunits p82 and p28.</text>
</comment>
<comment type="subunit">
    <text evidence="14 15">(Microbial infection) Interacts with potyvirus viral genome-linked protein (VPg); this interaction is possible in susceptible hosts but impaired in resistant plants.</text>
</comment>
<comment type="subcellular location">
    <subcellularLocation>
        <location evidence="1">Nucleus</location>
    </subcellularLocation>
    <subcellularLocation>
        <location evidence="1">Cytoplasm</location>
    </subcellularLocation>
</comment>
<comment type="PTM">
    <text evidence="2">According to the redox status, the Cys-113-Cys-151 disulfide bridge may have a role in regulating protein function by affecting its ability to bind capped mRNA.</text>
</comment>
<comment type="polymorphism">
    <text evidence="5">Variant present in the allele rym4, confers an increased resistance to barley yellow mosaic (BaYMV) and barley mild mosaic virus (BaMMV).</text>
</comment>
<comment type="polymorphism">
    <text evidence="5">Variant present in the allele rym5, confers an increased resistance to barley yellow mosaic (BaYMV), barley mild mosaic virus (BaMMV) and BaYMV-2.</text>
</comment>
<comment type="miscellaneous">
    <text evidence="13">Displayed sequence is cv. Morex.</text>
</comment>
<comment type="similarity">
    <text evidence="13">Belongs to the eukaryotic initiation factor 4E family.</text>
</comment>
<gene>
    <name evidence="10 11 12" type="primary">eIF4E</name>
</gene>
<accession>Q4QXS7</accession>
<accession>A0A0M5NBZ4</accession>
<accession>B8Y450</accession>
<accession>D8LAQ6</accession>
<accession>D8LAQ7</accession>
<accession>D8LAQ8</accession>
<accession>D8LAQ9</accession>
<accession>D8LAR0</accession>
<accession>D8LAR1</accession>
<accession>D8LAR2</accession>
<feature type="chain" id="PRO_0000454067" description="Eukaryotic translation initiation factor 4E-1">
    <location>
        <begin position="1"/>
        <end position="215"/>
    </location>
</feature>
<feature type="region of interest" description="Disordered" evidence="4">
    <location>
        <begin position="1"/>
        <end position="35"/>
    </location>
</feature>
<feature type="region of interest" description="EIF4G-binding" evidence="3">
    <location>
        <begin position="40"/>
        <end position="43"/>
    </location>
</feature>
<feature type="region of interest" description="EIF4G-binding" evidence="3">
    <location>
        <begin position="50"/>
        <end position="86"/>
    </location>
</feature>
<feature type="region of interest" description="EIF4G-binding" evidence="3">
    <location>
        <begin position="134"/>
        <end position="143"/>
    </location>
</feature>
<feature type="compositionally biased region" description="Acidic residues" evidence="4">
    <location>
        <begin position="16"/>
        <end position="27"/>
    </location>
</feature>
<feature type="binding site" evidence="2">
    <location>
        <begin position="58"/>
        <end position="63"/>
    </location>
    <ligand>
        <name>mRNA</name>
        <dbReference type="ChEBI" id="CHEBI:33699"/>
    </ligand>
    <ligandPart>
        <name>N(7)-methylguanosine 5'-triphosphate group</name>
        <dbReference type="ChEBI" id="CHEBI:74429"/>
        <note>m7GTP residue in mRNA cap</note>
    </ligandPart>
</feature>
<feature type="binding site" evidence="2">
    <location>
        <position position="90"/>
    </location>
    <ligand>
        <name>mRNA</name>
        <dbReference type="ChEBI" id="CHEBI:33699"/>
    </ligand>
    <ligandPart>
        <name>N(7)-methylguanosine 5'-triphosphate group</name>
        <dbReference type="ChEBI" id="CHEBI:74429"/>
        <note>m7GTP residue in mRNA cap</note>
    </ligandPart>
</feature>
<feature type="binding site" evidence="2">
    <location>
        <begin position="108"/>
        <end position="109"/>
    </location>
    <ligand>
        <name>mRNA</name>
        <dbReference type="ChEBI" id="CHEBI:33699"/>
    </ligand>
    <ligandPart>
        <name>N(7)-methylguanosine 5'-triphosphate group</name>
        <dbReference type="ChEBI" id="CHEBI:74429"/>
        <note>m7GTP residue in mRNA cap</note>
    </ligandPart>
</feature>
<feature type="binding site" evidence="2">
    <location>
        <begin position="158"/>
        <end position="163"/>
    </location>
    <ligand>
        <name>mRNA</name>
        <dbReference type="ChEBI" id="CHEBI:33699"/>
    </ligand>
    <ligandPart>
        <name>N(7)-methylguanosine 5'-triphosphate group</name>
        <dbReference type="ChEBI" id="CHEBI:74429"/>
        <note>m7GTP residue in mRNA cap</note>
    </ligandPart>
</feature>
<feature type="binding site" evidence="3">
    <location>
        <begin position="203"/>
        <end position="207"/>
    </location>
    <ligand>
        <name>mRNA</name>
        <dbReference type="ChEBI" id="CHEBI:33699"/>
    </ligand>
    <ligandPart>
        <name>N(7)-methylguanosine 5'-triphosphate group</name>
        <dbReference type="ChEBI" id="CHEBI:74429"/>
        <note>m7GTP residue in mRNA cap</note>
    </ligandPart>
</feature>
<feature type="disulfide bond" evidence="2">
    <location>
        <begin position="113"/>
        <end position="151"/>
    </location>
</feature>
<feature type="sequence variant" description="In strain: Miho Golden and Haruna Nijo. In allele rym5." evidence="5 6 7 8">
    <original>P</original>
    <variation>S</variation>
    <location>
        <position position="53"/>
    </location>
</feature>
<feature type="sequence variant" description="In alleles 40 and 44. In allele rym4." evidence="5 8">
    <original>S</original>
    <variation>F</variation>
    <location>
        <position position="57"/>
    </location>
</feature>
<feature type="sequence variant" description="In allele 44. In allele rym4." evidence="5 8">
    <original>K</original>
    <variation>I</variation>
    <location>
        <position position="118"/>
    </location>
</feature>
<feature type="sequence variant" description="In alleles 40 and 43. In allele rym4." evidence="5 8">
    <original>K</original>
    <variation>T</variation>
    <location>
        <position position="118"/>
    </location>
</feature>
<feature type="sequence variant" description="In strain: Sukai Golden and Mikamo Golden. In allele rym5." evidence="5 9">
    <original>T</original>
    <variation>S</variation>
    <location>
        <position position="120"/>
    </location>
</feature>
<feature type="sequence variant" description="In alleles 38 and 39." evidence="8">
    <original>NQ</original>
    <variation>KE</variation>
    <location>
        <begin position="160"/>
        <end position="161"/>
    </location>
</feature>
<feature type="sequence variant" description="In strain: Sukai Golden and Mikamo Golden. In allele rym5." evidence="5 9">
    <original>N</original>
    <variation>D</variation>
    <location>
        <position position="160"/>
    </location>
</feature>
<feature type="sequence variant" description="In strain: Miho Golden and Haruna Nijo." evidence="6 7 8">
    <original>Q</original>
    <variation>H</variation>
    <location>
        <position position="161"/>
    </location>
</feature>
<feature type="sequence variant" description="In strain: Sukai Golden and Mikamo Golden. In allele rym5." evidence="5 9">
    <original>Q</original>
    <variation>K</variation>
    <location>
        <position position="161"/>
    </location>
</feature>
<feature type="sequence variant" description="In allele 41." evidence="8">
    <original>T</original>
    <variation>I</variation>
    <location>
        <position position="175"/>
    </location>
</feature>
<feature type="sequence variant" description="In allele 42." evidence="8">
    <original>G</original>
    <variation>V</variation>
    <location>
        <position position="195"/>
    </location>
</feature>
<feature type="sequence variant" description="In allele rym4." evidence="5">
    <original>S</original>
    <variation>F</variation>
    <location>
        <position position="205"/>
    </location>
</feature>
<feature type="sequence variant" description="In alleles 40, 43 and 44. In allele rym4." evidence="5 8">
    <original>D</original>
    <variation>G</variation>
    <location>
        <position position="206"/>
    </location>
</feature>
<feature type="sequence variant" description="In alleles 40, 43 and 44." evidence="5 8">
    <original>G</original>
    <variation>A</variation>
    <location>
        <position position="208"/>
    </location>
</feature>
<feature type="sequence variant" description="In alleles 40, 43 and 44." evidence="5">
    <original>G</original>
    <variation>S</variation>
    <location>
        <position position="208"/>
    </location>
</feature>
<feature type="sequence variant" description="In allele 39." evidence="8">
    <original>A</original>
    <variation>G</variation>
    <location>
        <position position="209"/>
    </location>
</feature>
<sequence length="215" mass="23873">MAEDTETRPASAGAEEREEGEIADDGDGSAAAAAGRVSAHPLENAWTFWFDNPQGKSRAVAWGSTIHPIHTFSTVEDFWSLYNNIHHPSKLNVGADFHCFKDKIEPKWEDPICANGGKWTISCGKGKSDTFWLHTLLALIGEQFDFGDEICGAVVSVRKNQERVAIWTKNAANETAQISIGKQWKEFLDYKDSIGFVVHEDAKRSDKGAKNRYTV</sequence>
<evidence type="ECO:0000250" key="1">
    <source>
        <dbReference type="UniProtKB" id="C6ZJZ3"/>
    </source>
</evidence>
<evidence type="ECO:0000250" key="2">
    <source>
        <dbReference type="UniProtKB" id="P29557"/>
    </source>
</evidence>
<evidence type="ECO:0000250" key="3">
    <source>
        <dbReference type="UniProtKB" id="Q00LS8"/>
    </source>
</evidence>
<evidence type="ECO:0000256" key="4">
    <source>
        <dbReference type="SAM" id="MobiDB-lite"/>
    </source>
</evidence>
<evidence type="ECO:0000269" key="5">
    <source>
    </source>
</evidence>
<evidence type="ECO:0000269" key="6">
    <source>
    </source>
</evidence>
<evidence type="ECO:0000269" key="7">
    <source>
    </source>
</evidence>
<evidence type="ECO:0000269" key="8">
    <source>
    </source>
</evidence>
<evidence type="ECO:0000269" key="9">
    <source ref="3"/>
</evidence>
<evidence type="ECO:0000303" key="10">
    <source>
    </source>
</evidence>
<evidence type="ECO:0000303" key="11">
    <source>
    </source>
</evidence>
<evidence type="ECO:0000303" key="12">
    <source ref="3"/>
</evidence>
<evidence type="ECO:0000305" key="13"/>
<evidence type="ECO:0000305" key="14">
    <source>
    </source>
</evidence>
<evidence type="ECO:0000305" key="15">
    <source>
    </source>
</evidence>
<reference key="1">
    <citation type="journal article" date="2005" name="Plant J.">
        <title>A detailed look at 7 million years of genome evolution in a 439 kb contiguous sequence at the barley Hv-eIF4E locus: recombination, rearrangements and repeats.</title>
        <authorList>
            <person name="Wicker T."/>
            <person name="Zimmermann W."/>
            <person name="Perovic D."/>
            <person name="Paterson A.H."/>
            <person name="Ganal M."/>
            <person name="Graner A."/>
            <person name="Stein N."/>
        </authorList>
    </citation>
    <scope>NUCLEOTIDE SEQUENCE [GENOMIC DNA]</scope>
    <source>
        <strain>cv. Morex</strain>
    </source>
</reference>
<reference key="2">
    <citation type="journal article" date="2011" name="Mol. Ecol.">
        <title>An exceptionally high nucleotide and haplotype diversity and a signature of positive selection for the eIF4E resistance gene in barley are revealed by allele mining and phylogenetic analyses of natural populations.</title>
        <authorList>
            <person name="Hofinger B.J."/>
            <person name="Russell J.R."/>
            <person name="Bass C.G."/>
            <person name="Baldwin T."/>
            <person name="dos Reis M."/>
            <person name="Hedley P.E."/>
            <person name="Li Y."/>
            <person name="Macaulay M."/>
            <person name="Waugh R."/>
            <person name="Hammond-Kosack K.E."/>
            <person name="Kanyuka K."/>
        </authorList>
    </citation>
    <scope>NUCLEOTIDE SEQUENCE [MRNA]</scope>
    <scope>VARIANTS SER-53; PHE-57; ILE-118; THR-118; 160-ASN-GLN-161 DELINS LYS-GLU; HIS-161; ILE-175; VAL-195; GLY-206; ALA-208 AND GLY-209</scope>
    <scope>FUNCTION</scope>
    <scope>FUNCTION (MICROBIAL INFECTION)</scope>
    <scope>SUBUNIT (MICROBIAL INFECTION)</scope>
    <source>
        <strain>cv. Miho Golden</strain>
        <tissue>Leaf</tissue>
    </source>
</reference>
<reference key="3">
    <citation type="submission" date="2015-03" db="EMBL/GenBank/DDBJ databases">
        <title>Classification of Japanese barley cultivars with rym5 allelic barley yellow mosaic virus (BaYMV)-resistant genotypes using a CAPS marker for the eIF4E gene.</title>
        <authorList>
            <person name="Nagamine T."/>
        </authorList>
    </citation>
    <scope>NUCLEOTIDE SEQUENCE [GENOMIC DNA]</scope>
    <scope>VARIANTS SER-120; ASP-160 AND LYS-161</scope>
    <source>
        <strain>cv. Mikamo Golden</strain>
        <strain>cv. Sukai Golden</strain>
    </source>
</reference>
<reference key="4">
    <citation type="journal article" date="2009" name="Plant Physiol.">
        <title>Analysis of intraspecies diversity in wheat and barley genomes identifies breakpoints of ancient haplotypes and provides insight into the structure of diploid and hexaploid triticeae gene pools.</title>
        <authorList>
            <person name="Wicker T."/>
            <person name="Krattinger S.G."/>
            <person name="Lagudah E.S."/>
            <person name="Komatsuda T."/>
            <person name="Pourkheirandish M."/>
            <person name="Matsumoto T."/>
            <person name="Cloutier S."/>
            <person name="Reiser L."/>
            <person name="Kanamori H."/>
            <person name="Sato K."/>
            <person name="Perovic D."/>
            <person name="Stein N."/>
            <person name="Keller B."/>
        </authorList>
    </citation>
    <scope>NUCLEOTIDE SEQUENCE [LARGE SCALE GENOMIC DNA]</scope>
    <scope>VARIANTS SER-53 AND HIS-161</scope>
    <source>
        <strain>cv. Haruna Nijo</strain>
    </source>
</reference>
<reference key="5">
    <citation type="journal article" date="2012" name="Nature">
        <title>A physical, genetic and functional sequence assembly of the barley genome.</title>
        <authorList>
            <consortium name="International Barley Genome Sequencing Consortium"/>
            <person name="Mayer K.F."/>
            <person name="Waugh R."/>
            <person name="Brown J.W."/>
            <person name="Schulman A."/>
            <person name="Langridge P."/>
            <person name="Platzer M."/>
            <person name="Fincher G.B."/>
            <person name="Muehlbauer G.J."/>
            <person name="Sato K."/>
            <person name="Close T.J."/>
            <person name="Wise R.P."/>
            <person name="Stein N."/>
        </authorList>
    </citation>
    <scope>NUCLEOTIDE SEQUENCE [LARGE SCALE GENOMIC DNA]</scope>
    <source>
        <strain>cv. Morex</strain>
    </source>
</reference>
<reference key="6">
    <citation type="journal article" date="2011" name="Plant Physiol.">
        <title>Comprehensive sequence analysis of 24,783 barley full-length cDNAs derived from 12 clone libraries.</title>
        <authorList>
            <person name="Matsumoto T."/>
            <person name="Tanaka T."/>
            <person name="Sakai H."/>
            <person name="Amano N."/>
            <person name="Kanamori H."/>
            <person name="Kurita K."/>
            <person name="Kikuta A."/>
            <person name="Kamiya K."/>
            <person name="Yamamoto M."/>
            <person name="Ikawa H."/>
            <person name="Fujii N."/>
            <person name="Hori K."/>
            <person name="Itoh T."/>
            <person name="Sato K."/>
        </authorList>
    </citation>
    <scope>NUCLEOTIDE SEQUENCE [LARGE SCALE MRNA]</scope>
    <scope>VARIANTS SER-53 AND HIS-161</scope>
    <source>
        <strain>cv. Haruna Nijo</strain>
        <tissue>Root</tissue>
        <tissue>Shoot</tissue>
    </source>
</reference>
<reference key="7">
    <citation type="journal article" date="2005" name="Plant J.">
        <title>The eukaryotic translation initiation factor 4E confers multiallelic recessive Bymovirus resistance in Hordeum vulgare (L.).</title>
        <authorList>
            <person name="Stein N."/>
            <person name="Perovic D."/>
            <person name="Kumlehn J."/>
            <person name="Pellio B."/>
            <person name="Stracke S."/>
            <person name="Streng S."/>
            <person name="Ordon F."/>
            <person name="Graner A."/>
        </authorList>
    </citation>
    <scope>FUNCTION</scope>
    <scope>FUNCTION (MICROBIAL INFECTION)</scope>
    <scope>VARIANTS SER-53; PHE-57; ILE-118; THR-118; SER-120; ASP-160; LYS-161; PHE-205; GLY-206; ALA-208 AND SER-208</scope>
    <scope>SUBUNIT (MICROBIAL INFECTION)</scope>
    <scope>POLYMORPHISM</scope>
</reference>
<reference key="8">
    <citation type="journal article" date="2014" name="Infect. Genet. Evol.">
        <title>Evolution of plant eukaryotic initiation factor 4E (eIF4E) and potyvirus genome-linked protein (VPg): a game of mirrors impacting resistance spectrum and durability.</title>
        <authorList>
            <person name="Moury B."/>
            <person name="Charron C."/>
            <person name="Janzac B."/>
            <person name="Simon V."/>
            <person name="Gallois J.L."/>
            <person name="Palloix A."/>
            <person name="Caranta C."/>
        </authorList>
    </citation>
    <scope>GENE FAMILY</scope>
    <scope>REVIEW</scope>
</reference>
<proteinExistence type="evidence at protein level"/>
<keyword id="KW-0963">Cytoplasm</keyword>
<keyword id="KW-1015">Disulfide bond</keyword>
<keyword id="KW-0945">Host-virus interaction</keyword>
<keyword id="KW-0396">Initiation factor</keyword>
<keyword id="KW-0539">Nucleus</keyword>
<keyword id="KW-0611">Plant defense</keyword>
<keyword id="KW-0648">Protein biosynthesis</keyword>
<keyword id="KW-1185">Reference proteome</keyword>
<keyword id="KW-0694">RNA-binding</keyword>
<keyword id="KW-0810">Translation regulation</keyword>
<organism>
    <name type="scientific">Hordeum vulgare subsp. vulgare</name>
    <name type="common">Domesticated barley</name>
    <dbReference type="NCBI Taxonomy" id="112509"/>
    <lineage>
        <taxon>Eukaryota</taxon>
        <taxon>Viridiplantae</taxon>
        <taxon>Streptophyta</taxon>
        <taxon>Embryophyta</taxon>
        <taxon>Tracheophyta</taxon>
        <taxon>Spermatophyta</taxon>
        <taxon>Magnoliopsida</taxon>
        <taxon>Liliopsida</taxon>
        <taxon>Poales</taxon>
        <taxon>Poaceae</taxon>
        <taxon>BOP clade</taxon>
        <taxon>Pooideae</taxon>
        <taxon>Triticodae</taxon>
        <taxon>Triticeae</taxon>
        <taxon>Hordeinae</taxon>
        <taxon>Hordeum</taxon>
    </lineage>
</organism>
<name>IF4E1_HORVV</name>